<organism>
    <name type="scientific">Spodoptera frugiperda</name>
    <name type="common">Fall armyworm</name>
    <dbReference type="NCBI Taxonomy" id="7108"/>
    <lineage>
        <taxon>Eukaryota</taxon>
        <taxon>Metazoa</taxon>
        <taxon>Ecdysozoa</taxon>
        <taxon>Arthropoda</taxon>
        <taxon>Hexapoda</taxon>
        <taxon>Insecta</taxon>
        <taxon>Pterygota</taxon>
        <taxon>Neoptera</taxon>
        <taxon>Endopterygota</taxon>
        <taxon>Lepidoptera</taxon>
        <taxon>Glossata</taxon>
        <taxon>Ditrysia</taxon>
        <taxon>Noctuoidea</taxon>
        <taxon>Noctuidae</taxon>
        <taxon>Amphipyrinae</taxon>
        <taxon>Spodoptera</taxon>
    </lineage>
</organism>
<evidence type="ECO:0000250" key="1"/>
<evidence type="ECO:0000255" key="2"/>
<evidence type="ECO:0000256" key="3">
    <source>
        <dbReference type="SAM" id="MobiDB-lite"/>
    </source>
</evidence>
<evidence type="ECO:0000305" key="4"/>
<evidence type="ECO:0007829" key="5">
    <source>
        <dbReference type="PDB" id="1M72"/>
    </source>
</evidence>
<evidence type="ECO:0007829" key="6">
    <source>
        <dbReference type="PDB" id="2NN3"/>
    </source>
</evidence>
<proteinExistence type="evidence at protein level"/>
<comment type="function">
    <text evidence="1">Involved in the activation cascade of caspases responsible for apoptosis execution (By similarity). Inhibited by the baculovirus anti-apoptotic protein p35. Cleaves p35 and nuclear immunophilin FKBP46.</text>
</comment>
<comment type="subunit">
    <text>Heterotetramer that consists of two anti-parallel arranged heterodimers, each one formed by a 19/18 kDa (p19/18) and a 12 kDa (p12) subunit.</text>
</comment>
<comment type="PTM">
    <text>The two subunits are derived from the precursor sequence by an autocatalytic mechanism.</text>
</comment>
<comment type="similarity">
    <text evidence="4">Belongs to the peptidase C14A family.</text>
</comment>
<keyword id="KW-0002">3D-structure</keyword>
<keyword id="KW-0053">Apoptosis</keyword>
<keyword id="KW-0903">Direct protein sequencing</keyword>
<keyword id="KW-0378">Hydrolase</keyword>
<keyword id="KW-0645">Protease</keyword>
<keyword id="KW-0788">Thiol protease</keyword>
<keyword id="KW-0865">Zymogen</keyword>
<sequence>MLDGKQDNGNVDSVDIKQRTNGGGDEGDALGSNSSSQPNRVARMPVDRNAPYYNMNHKHRGMAIIFNHEHFDIHSLKSRTGTNVDSDNLSKVLKTLGFKVTVFPNLKSEEINKFIQQTAEMDHSDADCLLVAVLTHGELGMLYAKDTHYKPDNLWYYFTADKCPTLAGKPKLFFIQACQGDRLDGGITLSRTETDGSPSTSYRIPVHADFLIAFSTVPGYFSWRNTTRGSWFMQALCEELRYAGTERDILTLLTFVCQKVALDFESNAPDSAMMHQQKQVPCITSMLTRLLVFGKKQSH</sequence>
<feature type="propeptide" id="PRO_0000004658">
    <location>
        <begin position="1"/>
        <end position="28"/>
    </location>
</feature>
<feature type="chain" id="PRO_0000004659" description="Caspase-1 subunit p19/18">
    <location>
        <begin position="29"/>
        <end position="184"/>
    </location>
</feature>
<feature type="propeptide" id="PRO_0000004660" evidence="2">
    <location>
        <begin position="185"/>
        <end position="195"/>
    </location>
</feature>
<feature type="chain" id="PRO_0000004661" description="Caspase-1 subunit p12">
    <location>
        <begin position="196"/>
        <end position="299"/>
    </location>
</feature>
<feature type="region of interest" description="Disordered" evidence="3">
    <location>
        <begin position="1"/>
        <end position="45"/>
    </location>
</feature>
<feature type="active site" evidence="1">
    <location>
        <position position="136"/>
    </location>
</feature>
<feature type="active site" evidence="1">
    <location>
        <position position="178"/>
    </location>
</feature>
<feature type="strand" evidence="5">
    <location>
        <begin position="41"/>
        <end position="43"/>
    </location>
</feature>
<feature type="strand" evidence="5">
    <location>
        <begin position="57"/>
        <end position="67"/>
    </location>
</feature>
<feature type="helix" evidence="5">
    <location>
        <begin position="82"/>
        <end position="95"/>
    </location>
</feature>
<feature type="strand" evidence="5">
    <location>
        <begin position="99"/>
        <end position="105"/>
    </location>
</feature>
<feature type="helix" evidence="5">
    <location>
        <begin position="108"/>
        <end position="119"/>
    </location>
</feature>
<feature type="helix" evidence="6">
    <location>
        <begin position="123"/>
        <end position="125"/>
    </location>
</feature>
<feature type="strand" evidence="5">
    <location>
        <begin position="126"/>
        <end position="135"/>
    </location>
</feature>
<feature type="strand" evidence="5">
    <location>
        <begin position="141"/>
        <end position="143"/>
    </location>
</feature>
<feature type="strand" evidence="5">
    <location>
        <begin position="145"/>
        <end position="149"/>
    </location>
</feature>
<feature type="helix" evidence="5">
    <location>
        <begin position="153"/>
        <end position="156"/>
    </location>
</feature>
<feature type="turn" evidence="5">
    <location>
        <begin position="160"/>
        <end position="162"/>
    </location>
</feature>
<feature type="helix" evidence="5">
    <location>
        <begin position="164"/>
        <end position="166"/>
    </location>
</feature>
<feature type="strand" evidence="5">
    <location>
        <begin position="171"/>
        <end position="177"/>
    </location>
</feature>
<feature type="strand" evidence="5">
    <location>
        <begin position="179"/>
        <end position="182"/>
    </location>
</feature>
<feature type="strand" evidence="5">
    <location>
        <begin position="187"/>
        <end position="190"/>
    </location>
</feature>
<feature type="strand" evidence="5">
    <location>
        <begin position="202"/>
        <end position="204"/>
    </location>
</feature>
<feature type="strand" evidence="5">
    <location>
        <begin position="209"/>
        <end position="216"/>
    </location>
</feature>
<feature type="strand" evidence="5">
    <location>
        <begin position="223"/>
        <end position="225"/>
    </location>
</feature>
<feature type="turn" evidence="5">
    <location>
        <begin position="226"/>
        <end position="228"/>
    </location>
</feature>
<feature type="helix" evidence="5">
    <location>
        <begin position="231"/>
        <end position="243"/>
    </location>
</feature>
<feature type="turn" evidence="5">
    <location>
        <begin position="244"/>
        <end position="246"/>
    </location>
</feature>
<feature type="helix" evidence="5">
    <location>
        <begin position="249"/>
        <end position="263"/>
    </location>
</feature>
<feature type="strand" evidence="6">
    <location>
        <begin position="266"/>
        <end position="268"/>
    </location>
</feature>
<feature type="helix" evidence="5">
    <location>
        <begin position="272"/>
        <end position="274"/>
    </location>
</feature>
<feature type="strand" evidence="5">
    <location>
        <begin position="282"/>
        <end position="285"/>
    </location>
</feature>
<feature type="strand" evidence="5">
    <location>
        <begin position="288"/>
        <end position="290"/>
    </location>
</feature>
<name>CASP1_SPOFR</name>
<accession>P89116</accession>
<dbReference type="EC" id="3.4.22.-"/>
<dbReference type="EMBL" id="U81510">
    <property type="protein sequence ID" value="AAC47442.1"/>
    <property type="molecule type" value="mRNA"/>
</dbReference>
<dbReference type="RefSeq" id="XP_035437069.2">
    <property type="nucleotide sequence ID" value="XM_035581176.2"/>
</dbReference>
<dbReference type="PDB" id="1M72">
    <property type="method" value="X-ray"/>
    <property type="resolution" value="2.30 A"/>
    <property type="chains" value="A/B/C=29-299"/>
</dbReference>
<dbReference type="PDB" id="2NN3">
    <property type="method" value="X-ray"/>
    <property type="resolution" value="3.00 A"/>
    <property type="chains" value="C/D=1-299"/>
</dbReference>
<dbReference type="PDBsum" id="1M72"/>
<dbReference type="PDBsum" id="2NN3"/>
<dbReference type="SMR" id="P89116"/>
<dbReference type="MEROPS" id="C14.015"/>
<dbReference type="EnsemblMetazoa" id="XM_035581176.2">
    <property type="protein sequence ID" value="XP_035437069.2"/>
    <property type="gene ID" value="LOC118267265"/>
</dbReference>
<dbReference type="GeneID" id="118267265"/>
<dbReference type="OrthoDB" id="6116485at2759"/>
<dbReference type="BRENDA" id="3.4.22.36">
    <property type="organism ID" value="5836"/>
</dbReference>
<dbReference type="EvolutionaryTrace" id="P89116"/>
<dbReference type="Proteomes" id="UP000829999">
    <property type="component" value="Chromosome 23"/>
</dbReference>
<dbReference type="GO" id="GO:0005737">
    <property type="term" value="C:cytoplasm"/>
    <property type="evidence" value="ECO:0007669"/>
    <property type="project" value="TreeGrafter"/>
</dbReference>
<dbReference type="GO" id="GO:0004197">
    <property type="term" value="F:cysteine-type endopeptidase activity"/>
    <property type="evidence" value="ECO:0007669"/>
    <property type="project" value="InterPro"/>
</dbReference>
<dbReference type="GO" id="GO:0006915">
    <property type="term" value="P:apoptotic process"/>
    <property type="evidence" value="ECO:0007669"/>
    <property type="project" value="UniProtKB-KW"/>
</dbReference>
<dbReference type="GO" id="GO:0043525">
    <property type="term" value="P:positive regulation of neuron apoptotic process"/>
    <property type="evidence" value="ECO:0007669"/>
    <property type="project" value="TreeGrafter"/>
</dbReference>
<dbReference type="GO" id="GO:0006508">
    <property type="term" value="P:proteolysis"/>
    <property type="evidence" value="ECO:0007669"/>
    <property type="project" value="UniProtKB-KW"/>
</dbReference>
<dbReference type="CDD" id="cd00032">
    <property type="entry name" value="CASc"/>
    <property type="match status" value="1"/>
</dbReference>
<dbReference type="FunFam" id="3.40.50.1460:FF:000001">
    <property type="entry name" value="Caspase-3 preproprotein"/>
    <property type="match status" value="1"/>
</dbReference>
<dbReference type="Gene3D" id="3.40.50.1460">
    <property type="match status" value="1"/>
</dbReference>
<dbReference type="InterPro" id="IPR029030">
    <property type="entry name" value="Caspase-like_dom_sf"/>
</dbReference>
<dbReference type="InterPro" id="IPR033139">
    <property type="entry name" value="Caspase_cys_AS"/>
</dbReference>
<dbReference type="InterPro" id="IPR016129">
    <property type="entry name" value="Caspase_his_AS"/>
</dbReference>
<dbReference type="InterPro" id="IPR002398">
    <property type="entry name" value="Pept_C14"/>
</dbReference>
<dbReference type="InterPro" id="IPR011600">
    <property type="entry name" value="Pept_C14_caspase"/>
</dbReference>
<dbReference type="InterPro" id="IPR002138">
    <property type="entry name" value="Pept_C14_p10"/>
</dbReference>
<dbReference type="InterPro" id="IPR001309">
    <property type="entry name" value="Pept_C14_p20"/>
</dbReference>
<dbReference type="InterPro" id="IPR015917">
    <property type="entry name" value="Pept_C14A"/>
</dbReference>
<dbReference type="PANTHER" id="PTHR10454">
    <property type="entry name" value="CASPASE"/>
    <property type="match status" value="1"/>
</dbReference>
<dbReference type="PANTHER" id="PTHR10454:SF245">
    <property type="entry name" value="CASPASE-RELATED"/>
    <property type="match status" value="1"/>
</dbReference>
<dbReference type="Pfam" id="PF00656">
    <property type="entry name" value="Peptidase_C14"/>
    <property type="match status" value="1"/>
</dbReference>
<dbReference type="PRINTS" id="PR00376">
    <property type="entry name" value="IL1BCENZYME"/>
</dbReference>
<dbReference type="SMART" id="SM00115">
    <property type="entry name" value="CASc"/>
    <property type="match status" value="1"/>
</dbReference>
<dbReference type="SUPFAM" id="SSF52129">
    <property type="entry name" value="Caspase-like"/>
    <property type="match status" value="1"/>
</dbReference>
<dbReference type="PROSITE" id="PS01122">
    <property type="entry name" value="CASPASE_CYS"/>
    <property type="match status" value="1"/>
</dbReference>
<dbReference type="PROSITE" id="PS01121">
    <property type="entry name" value="CASPASE_HIS"/>
    <property type="match status" value="1"/>
</dbReference>
<dbReference type="PROSITE" id="PS50207">
    <property type="entry name" value="CASPASE_P10"/>
    <property type="match status" value="1"/>
</dbReference>
<dbReference type="PROSITE" id="PS50208">
    <property type="entry name" value="CASPASE_P20"/>
    <property type="match status" value="1"/>
</dbReference>
<protein>
    <recommendedName>
        <fullName>Caspase-1</fullName>
        <ecNumber>3.4.22.-</ecNumber>
    </recommendedName>
    <component>
        <recommendedName>
            <fullName>Caspase-1 subunit p19/18</fullName>
        </recommendedName>
    </component>
    <component>
        <recommendedName>
            <fullName>Caspase-1 subunit p12</fullName>
        </recommendedName>
    </component>
</protein>
<reference key="1">
    <citation type="journal article" date="1997" name="J. Biol. Chem.">
        <title>Spodoptera frugiperda caspase-1, a novel insect death protease that cleaves the nuclear immunophilin FKBP46, is the target of the baculovirus antiapoptotic protein p35.</title>
        <authorList>
            <person name="Ahmad M."/>
            <person name="Srinivasula S.M."/>
            <person name="Wang L."/>
            <person name="Litwack G."/>
            <person name="Fernandes-Alnemri T."/>
            <person name="Alnemri E.S."/>
        </authorList>
    </citation>
    <scope>NUCLEOTIDE SEQUENCE [MRNA]</scope>
    <scope>PARTIAL PROTEIN SEQUENCE</scope>
</reference>